<accession>A4TLP0</accession>
<proteinExistence type="inferred from homology"/>
<feature type="chain" id="PRO_1000017857" description="Peptidase T">
    <location>
        <begin position="1"/>
        <end position="411"/>
    </location>
</feature>
<feature type="active site" evidence="1">
    <location>
        <position position="80"/>
    </location>
</feature>
<feature type="active site" description="Proton acceptor" evidence="1">
    <location>
        <position position="173"/>
    </location>
</feature>
<feature type="binding site" evidence="1">
    <location>
        <position position="78"/>
    </location>
    <ligand>
        <name>Zn(2+)</name>
        <dbReference type="ChEBI" id="CHEBI:29105"/>
        <label>1</label>
    </ligand>
</feature>
<feature type="binding site" evidence="1">
    <location>
        <position position="140"/>
    </location>
    <ligand>
        <name>Zn(2+)</name>
        <dbReference type="ChEBI" id="CHEBI:29105"/>
        <label>1</label>
    </ligand>
</feature>
<feature type="binding site" evidence="1">
    <location>
        <position position="140"/>
    </location>
    <ligand>
        <name>Zn(2+)</name>
        <dbReference type="ChEBI" id="CHEBI:29105"/>
        <label>2</label>
    </ligand>
</feature>
<feature type="binding site" evidence="1">
    <location>
        <position position="174"/>
    </location>
    <ligand>
        <name>Zn(2+)</name>
        <dbReference type="ChEBI" id="CHEBI:29105"/>
        <label>2</label>
    </ligand>
</feature>
<feature type="binding site" evidence="1">
    <location>
        <position position="196"/>
    </location>
    <ligand>
        <name>Zn(2+)</name>
        <dbReference type="ChEBI" id="CHEBI:29105"/>
        <label>1</label>
    </ligand>
</feature>
<feature type="binding site" evidence="1">
    <location>
        <position position="379"/>
    </location>
    <ligand>
        <name>Zn(2+)</name>
        <dbReference type="ChEBI" id="CHEBI:29105"/>
        <label>2</label>
    </ligand>
</feature>
<organism>
    <name type="scientific">Yersinia pestis (strain Pestoides F)</name>
    <dbReference type="NCBI Taxonomy" id="386656"/>
    <lineage>
        <taxon>Bacteria</taxon>
        <taxon>Pseudomonadati</taxon>
        <taxon>Pseudomonadota</taxon>
        <taxon>Gammaproteobacteria</taxon>
        <taxon>Enterobacterales</taxon>
        <taxon>Yersiniaceae</taxon>
        <taxon>Yersinia</taxon>
    </lineage>
</organism>
<reference key="1">
    <citation type="submission" date="2007-02" db="EMBL/GenBank/DDBJ databases">
        <title>Complete sequence of chromosome of Yersinia pestis Pestoides F.</title>
        <authorList>
            <consortium name="US DOE Joint Genome Institute"/>
            <person name="Copeland A."/>
            <person name="Lucas S."/>
            <person name="Lapidus A."/>
            <person name="Barry K."/>
            <person name="Detter J.C."/>
            <person name="Glavina del Rio T."/>
            <person name="Hammon N."/>
            <person name="Israni S."/>
            <person name="Dalin E."/>
            <person name="Tice H."/>
            <person name="Pitluck S."/>
            <person name="Di Bartolo G."/>
            <person name="Chain P."/>
            <person name="Malfatti S."/>
            <person name="Shin M."/>
            <person name="Vergez L."/>
            <person name="Schmutz J."/>
            <person name="Larimer F."/>
            <person name="Land M."/>
            <person name="Hauser L."/>
            <person name="Worsham P."/>
            <person name="Chu M."/>
            <person name="Bearden S."/>
            <person name="Garcia E."/>
            <person name="Richardson P."/>
        </authorList>
    </citation>
    <scope>NUCLEOTIDE SEQUENCE [LARGE SCALE GENOMIC DNA]</scope>
    <source>
        <strain>Pestoides F</strain>
    </source>
</reference>
<protein>
    <recommendedName>
        <fullName evidence="1">Peptidase T</fullName>
        <ecNumber evidence="1">3.4.11.4</ecNumber>
    </recommendedName>
    <alternativeName>
        <fullName evidence="1">Aminotripeptidase</fullName>
        <shortName evidence="1">Tripeptidase</shortName>
    </alternativeName>
    <alternativeName>
        <fullName evidence="1">Tripeptide aminopeptidase</fullName>
    </alternativeName>
</protein>
<sequence>MDKLLDRFFNYVSFDTQAKANVKSVPSTQGQRKLAQALQQELLTLGFSHVTLSDHGCVMATLPANVSWPVPTIGFIAHLDTSPDFSGKNVNPQIVENYRGGDIALGIGDEVLSPVMFPVLHQLLGHTLITTDGKTLLGADDKAGIAEIITAMVRLKHRNVPHGDIRIAFTPDEEVGKGAQFFNVAEFDAQWAYTVDGGGIGELEFENFNAASVAIKIVGNNVHPGSAKGVMVNALSLATRYHQELPVDETPECTEGYDGFYHLQSIKGTVERAEMHYIVRDFNRDSFEARKKNMVDIAKRVGKGLHRDCYIEIVIDDSYYNMREQIIKHPHIIELAQQAMLDCDITPIMKPIRGGTDGAQLSFKGLPCPNIFTGGYNYHGKHEFITLEGMEKAVAVIMRISELTAKRAKES</sequence>
<evidence type="ECO:0000255" key="1">
    <source>
        <dbReference type="HAMAP-Rule" id="MF_00550"/>
    </source>
</evidence>
<gene>
    <name evidence="1" type="primary">pepT</name>
    <name type="ordered locus">YPDSF_1817</name>
</gene>
<comment type="function">
    <text evidence="1">Cleaves the N-terminal amino acid of tripeptides.</text>
</comment>
<comment type="catalytic activity">
    <reaction evidence="1">
        <text>Release of the N-terminal residue from a tripeptide.</text>
        <dbReference type="EC" id="3.4.11.4"/>
    </reaction>
</comment>
<comment type="cofactor">
    <cofactor evidence="1">
        <name>Zn(2+)</name>
        <dbReference type="ChEBI" id="CHEBI:29105"/>
    </cofactor>
    <text evidence="1">Binds 2 Zn(2+) ions per subunit.</text>
</comment>
<comment type="subcellular location">
    <subcellularLocation>
        <location evidence="1">Cytoplasm</location>
    </subcellularLocation>
</comment>
<comment type="similarity">
    <text evidence="1">Belongs to the peptidase M20B family.</text>
</comment>
<keyword id="KW-0031">Aminopeptidase</keyword>
<keyword id="KW-0963">Cytoplasm</keyword>
<keyword id="KW-0378">Hydrolase</keyword>
<keyword id="KW-0479">Metal-binding</keyword>
<keyword id="KW-0482">Metalloprotease</keyword>
<keyword id="KW-0645">Protease</keyword>
<keyword id="KW-0862">Zinc</keyword>
<dbReference type="EC" id="3.4.11.4" evidence="1"/>
<dbReference type="EMBL" id="CP000668">
    <property type="protein sequence ID" value="ABP40202.1"/>
    <property type="molecule type" value="Genomic_DNA"/>
</dbReference>
<dbReference type="RefSeq" id="WP_002210920.1">
    <property type="nucleotide sequence ID" value="NZ_CP009715.1"/>
</dbReference>
<dbReference type="SMR" id="A4TLP0"/>
<dbReference type="MEROPS" id="M20.003"/>
<dbReference type="GeneID" id="57976942"/>
<dbReference type="KEGG" id="ypp:YPDSF_1817"/>
<dbReference type="PATRIC" id="fig|386656.14.peg.3272"/>
<dbReference type="GO" id="GO:0005829">
    <property type="term" value="C:cytosol"/>
    <property type="evidence" value="ECO:0007669"/>
    <property type="project" value="TreeGrafter"/>
</dbReference>
<dbReference type="GO" id="GO:0008237">
    <property type="term" value="F:metallopeptidase activity"/>
    <property type="evidence" value="ECO:0007669"/>
    <property type="project" value="UniProtKB-KW"/>
</dbReference>
<dbReference type="GO" id="GO:0045148">
    <property type="term" value="F:tripeptide aminopeptidase activity"/>
    <property type="evidence" value="ECO:0007669"/>
    <property type="project" value="UniProtKB-UniRule"/>
</dbReference>
<dbReference type="GO" id="GO:0008270">
    <property type="term" value="F:zinc ion binding"/>
    <property type="evidence" value="ECO:0007669"/>
    <property type="project" value="UniProtKB-UniRule"/>
</dbReference>
<dbReference type="GO" id="GO:0043171">
    <property type="term" value="P:peptide catabolic process"/>
    <property type="evidence" value="ECO:0007669"/>
    <property type="project" value="UniProtKB-UniRule"/>
</dbReference>
<dbReference type="GO" id="GO:0006508">
    <property type="term" value="P:proteolysis"/>
    <property type="evidence" value="ECO:0007669"/>
    <property type="project" value="UniProtKB-UniRule"/>
</dbReference>
<dbReference type="CDD" id="cd03892">
    <property type="entry name" value="M20_peptT"/>
    <property type="match status" value="1"/>
</dbReference>
<dbReference type="FunFam" id="3.30.70.360:FF:000002">
    <property type="entry name" value="Peptidase T"/>
    <property type="match status" value="1"/>
</dbReference>
<dbReference type="Gene3D" id="3.30.70.360">
    <property type="match status" value="1"/>
</dbReference>
<dbReference type="Gene3D" id="3.40.630.10">
    <property type="entry name" value="Zn peptidases"/>
    <property type="match status" value="1"/>
</dbReference>
<dbReference type="HAMAP" id="MF_00550">
    <property type="entry name" value="Aminopeptidase_M20"/>
    <property type="match status" value="1"/>
</dbReference>
<dbReference type="InterPro" id="IPR001261">
    <property type="entry name" value="ArgE/DapE_CS"/>
</dbReference>
<dbReference type="InterPro" id="IPR036264">
    <property type="entry name" value="Bact_exopeptidase_dim_dom"/>
</dbReference>
<dbReference type="InterPro" id="IPR002933">
    <property type="entry name" value="Peptidase_M20"/>
</dbReference>
<dbReference type="InterPro" id="IPR011650">
    <property type="entry name" value="Peptidase_M20_dimer"/>
</dbReference>
<dbReference type="InterPro" id="IPR010161">
    <property type="entry name" value="Peptidase_M20B"/>
</dbReference>
<dbReference type="NCBIfam" id="TIGR01882">
    <property type="entry name" value="peptidase-T"/>
    <property type="match status" value="1"/>
</dbReference>
<dbReference type="NCBIfam" id="NF003976">
    <property type="entry name" value="PRK05469.1"/>
    <property type="match status" value="1"/>
</dbReference>
<dbReference type="NCBIfam" id="NF009920">
    <property type="entry name" value="PRK13381.1"/>
    <property type="match status" value="1"/>
</dbReference>
<dbReference type="PANTHER" id="PTHR42994">
    <property type="entry name" value="PEPTIDASE T"/>
    <property type="match status" value="1"/>
</dbReference>
<dbReference type="PANTHER" id="PTHR42994:SF1">
    <property type="entry name" value="PEPTIDASE T"/>
    <property type="match status" value="1"/>
</dbReference>
<dbReference type="Pfam" id="PF07687">
    <property type="entry name" value="M20_dimer"/>
    <property type="match status" value="1"/>
</dbReference>
<dbReference type="Pfam" id="PF01546">
    <property type="entry name" value="Peptidase_M20"/>
    <property type="match status" value="1"/>
</dbReference>
<dbReference type="PIRSF" id="PIRSF037215">
    <property type="entry name" value="Peptidase_M20B"/>
    <property type="match status" value="1"/>
</dbReference>
<dbReference type="SUPFAM" id="SSF55031">
    <property type="entry name" value="Bacterial exopeptidase dimerisation domain"/>
    <property type="match status" value="1"/>
</dbReference>
<dbReference type="SUPFAM" id="SSF53187">
    <property type="entry name" value="Zn-dependent exopeptidases"/>
    <property type="match status" value="1"/>
</dbReference>
<dbReference type="PROSITE" id="PS00758">
    <property type="entry name" value="ARGE_DAPE_CPG2_1"/>
    <property type="match status" value="1"/>
</dbReference>
<dbReference type="PROSITE" id="PS00759">
    <property type="entry name" value="ARGE_DAPE_CPG2_2"/>
    <property type="match status" value="1"/>
</dbReference>
<name>PEPT_YERPP</name>